<name>LEU3_MANSM</name>
<accession>Q65V05</accession>
<evidence type="ECO:0000255" key="1">
    <source>
        <dbReference type="HAMAP-Rule" id="MF_01033"/>
    </source>
</evidence>
<gene>
    <name evidence="1" type="primary">leuB</name>
    <name type="ordered locus">MS0598</name>
</gene>
<feature type="chain" id="PRO_0000083707" description="3-isopropylmalate dehydrogenase">
    <location>
        <begin position="1"/>
        <end position="358"/>
    </location>
</feature>
<feature type="binding site" evidence="1">
    <location>
        <begin position="77"/>
        <end position="90"/>
    </location>
    <ligand>
        <name>NAD(+)</name>
        <dbReference type="ChEBI" id="CHEBI:57540"/>
    </ligand>
</feature>
<feature type="binding site" evidence="1">
    <location>
        <position position="98"/>
    </location>
    <ligand>
        <name>substrate</name>
    </ligand>
</feature>
<feature type="binding site" evidence="1">
    <location>
        <position position="108"/>
    </location>
    <ligand>
        <name>substrate</name>
    </ligand>
</feature>
<feature type="binding site" evidence="1">
    <location>
        <position position="137"/>
    </location>
    <ligand>
        <name>substrate</name>
    </ligand>
</feature>
<feature type="binding site" evidence="1">
    <location>
        <position position="226"/>
    </location>
    <ligand>
        <name>Mg(2+)</name>
        <dbReference type="ChEBI" id="CHEBI:18420"/>
    </ligand>
</feature>
<feature type="binding site" evidence="1">
    <location>
        <position position="226"/>
    </location>
    <ligand>
        <name>substrate</name>
    </ligand>
</feature>
<feature type="binding site" evidence="1">
    <location>
        <position position="250"/>
    </location>
    <ligand>
        <name>Mg(2+)</name>
        <dbReference type="ChEBI" id="CHEBI:18420"/>
    </ligand>
</feature>
<feature type="binding site" evidence="1">
    <location>
        <position position="254"/>
    </location>
    <ligand>
        <name>Mg(2+)</name>
        <dbReference type="ChEBI" id="CHEBI:18420"/>
    </ligand>
</feature>
<feature type="binding site" evidence="1">
    <location>
        <begin position="284"/>
        <end position="296"/>
    </location>
    <ligand>
        <name>NAD(+)</name>
        <dbReference type="ChEBI" id="CHEBI:57540"/>
    </ligand>
</feature>
<feature type="site" description="Important for catalysis" evidence="1">
    <location>
        <position position="144"/>
    </location>
</feature>
<feature type="site" description="Important for catalysis" evidence="1">
    <location>
        <position position="194"/>
    </location>
</feature>
<proteinExistence type="inferred from homology"/>
<protein>
    <recommendedName>
        <fullName evidence="1">3-isopropylmalate dehydrogenase</fullName>
        <ecNumber evidence="1">1.1.1.85</ecNumber>
    </recommendedName>
    <alternativeName>
        <fullName evidence="1">3-IPM-DH</fullName>
    </alternativeName>
    <alternativeName>
        <fullName evidence="1">Beta-IPM dehydrogenase</fullName>
        <shortName evidence="1">IMDH</shortName>
    </alternativeName>
</protein>
<keyword id="KW-0028">Amino-acid biosynthesis</keyword>
<keyword id="KW-0100">Branched-chain amino acid biosynthesis</keyword>
<keyword id="KW-0963">Cytoplasm</keyword>
<keyword id="KW-0432">Leucine biosynthesis</keyword>
<keyword id="KW-0460">Magnesium</keyword>
<keyword id="KW-0464">Manganese</keyword>
<keyword id="KW-0479">Metal-binding</keyword>
<keyword id="KW-0520">NAD</keyword>
<keyword id="KW-0560">Oxidoreductase</keyword>
<dbReference type="EC" id="1.1.1.85" evidence="1"/>
<dbReference type="EMBL" id="AE016827">
    <property type="protein sequence ID" value="AAU37205.1"/>
    <property type="molecule type" value="Genomic_DNA"/>
</dbReference>
<dbReference type="RefSeq" id="WP_011199777.1">
    <property type="nucleotide sequence ID" value="NC_006300.1"/>
</dbReference>
<dbReference type="SMR" id="Q65V05"/>
<dbReference type="STRING" id="221988.MS0598"/>
<dbReference type="KEGG" id="msu:MS0598"/>
<dbReference type="eggNOG" id="COG0473">
    <property type="taxonomic scope" value="Bacteria"/>
</dbReference>
<dbReference type="HOGENOM" id="CLU_031953_0_3_6"/>
<dbReference type="OrthoDB" id="9767905at2"/>
<dbReference type="UniPathway" id="UPA00048">
    <property type="reaction ID" value="UER00072"/>
</dbReference>
<dbReference type="Proteomes" id="UP000000607">
    <property type="component" value="Chromosome"/>
</dbReference>
<dbReference type="GO" id="GO:0005829">
    <property type="term" value="C:cytosol"/>
    <property type="evidence" value="ECO:0007669"/>
    <property type="project" value="TreeGrafter"/>
</dbReference>
<dbReference type="GO" id="GO:0003862">
    <property type="term" value="F:3-isopropylmalate dehydrogenase activity"/>
    <property type="evidence" value="ECO:0007669"/>
    <property type="project" value="UniProtKB-UniRule"/>
</dbReference>
<dbReference type="GO" id="GO:0000287">
    <property type="term" value="F:magnesium ion binding"/>
    <property type="evidence" value="ECO:0007669"/>
    <property type="project" value="InterPro"/>
</dbReference>
<dbReference type="GO" id="GO:0051287">
    <property type="term" value="F:NAD binding"/>
    <property type="evidence" value="ECO:0007669"/>
    <property type="project" value="InterPro"/>
</dbReference>
<dbReference type="GO" id="GO:0009098">
    <property type="term" value="P:L-leucine biosynthetic process"/>
    <property type="evidence" value="ECO:0007669"/>
    <property type="project" value="UniProtKB-UniRule"/>
</dbReference>
<dbReference type="FunFam" id="3.40.718.10:FF:000004">
    <property type="entry name" value="3-isopropylmalate dehydrogenase"/>
    <property type="match status" value="1"/>
</dbReference>
<dbReference type="Gene3D" id="3.40.718.10">
    <property type="entry name" value="Isopropylmalate Dehydrogenase"/>
    <property type="match status" value="1"/>
</dbReference>
<dbReference type="HAMAP" id="MF_01033">
    <property type="entry name" value="LeuB_type1"/>
    <property type="match status" value="1"/>
</dbReference>
<dbReference type="InterPro" id="IPR019818">
    <property type="entry name" value="IsoCit/isopropylmalate_DH_CS"/>
</dbReference>
<dbReference type="InterPro" id="IPR024084">
    <property type="entry name" value="IsoPropMal-DH-like_dom"/>
</dbReference>
<dbReference type="InterPro" id="IPR004429">
    <property type="entry name" value="Isopropylmalate_DH"/>
</dbReference>
<dbReference type="NCBIfam" id="TIGR00169">
    <property type="entry name" value="leuB"/>
    <property type="match status" value="1"/>
</dbReference>
<dbReference type="PANTHER" id="PTHR42979">
    <property type="entry name" value="3-ISOPROPYLMALATE DEHYDROGENASE"/>
    <property type="match status" value="1"/>
</dbReference>
<dbReference type="PANTHER" id="PTHR42979:SF1">
    <property type="entry name" value="3-ISOPROPYLMALATE DEHYDROGENASE"/>
    <property type="match status" value="1"/>
</dbReference>
<dbReference type="Pfam" id="PF00180">
    <property type="entry name" value="Iso_dh"/>
    <property type="match status" value="1"/>
</dbReference>
<dbReference type="SMART" id="SM01329">
    <property type="entry name" value="Iso_dh"/>
    <property type="match status" value="1"/>
</dbReference>
<dbReference type="SUPFAM" id="SSF53659">
    <property type="entry name" value="Isocitrate/Isopropylmalate dehydrogenase-like"/>
    <property type="match status" value="1"/>
</dbReference>
<dbReference type="PROSITE" id="PS00470">
    <property type="entry name" value="IDH_IMDH"/>
    <property type="match status" value="1"/>
</dbReference>
<organism>
    <name type="scientific">Mannheimia succiniciproducens (strain KCTC 0769BP / MBEL55E)</name>
    <dbReference type="NCBI Taxonomy" id="221988"/>
    <lineage>
        <taxon>Bacteria</taxon>
        <taxon>Pseudomonadati</taxon>
        <taxon>Pseudomonadota</taxon>
        <taxon>Gammaproteobacteria</taxon>
        <taxon>Pasteurellales</taxon>
        <taxon>Pasteurellaceae</taxon>
        <taxon>Basfia</taxon>
    </lineage>
</organism>
<comment type="function">
    <text evidence="1">Catalyzes the oxidation of 3-carboxy-2-hydroxy-4-methylpentanoate (3-isopropylmalate) to 3-carboxy-4-methyl-2-oxopentanoate. The product decarboxylates to 4-methyl-2 oxopentanoate.</text>
</comment>
<comment type="catalytic activity">
    <reaction evidence="1">
        <text>(2R,3S)-3-isopropylmalate + NAD(+) = 4-methyl-2-oxopentanoate + CO2 + NADH</text>
        <dbReference type="Rhea" id="RHEA:32271"/>
        <dbReference type="ChEBI" id="CHEBI:16526"/>
        <dbReference type="ChEBI" id="CHEBI:17865"/>
        <dbReference type="ChEBI" id="CHEBI:35121"/>
        <dbReference type="ChEBI" id="CHEBI:57540"/>
        <dbReference type="ChEBI" id="CHEBI:57945"/>
        <dbReference type="EC" id="1.1.1.85"/>
    </reaction>
</comment>
<comment type="cofactor">
    <cofactor evidence="1">
        <name>Mg(2+)</name>
        <dbReference type="ChEBI" id="CHEBI:18420"/>
    </cofactor>
    <cofactor evidence="1">
        <name>Mn(2+)</name>
        <dbReference type="ChEBI" id="CHEBI:29035"/>
    </cofactor>
    <text evidence="1">Binds 1 Mg(2+) or Mn(2+) ion per subunit.</text>
</comment>
<comment type="pathway">
    <text evidence="1">Amino-acid biosynthesis; L-leucine biosynthesis; L-leucine from 3-methyl-2-oxobutanoate: step 3/4.</text>
</comment>
<comment type="subunit">
    <text evidence="1">Homodimer.</text>
</comment>
<comment type="subcellular location">
    <subcellularLocation>
        <location evidence="1">Cytoplasm</location>
    </subcellularLocation>
</comment>
<comment type="similarity">
    <text evidence="1">Belongs to the isocitrate and isopropylmalate dehydrogenases family. LeuB type 1 subfamily.</text>
</comment>
<sequence>MSTYNVAVLPGDGIGPEVMAEAIKVLDKVQAKFGFKLNFTQYLVGGAAIDAKGEPLPAETLQGCDNADAILFGSVGGPKWTHLPPDQQPERGALLPLRKHFKLFCNLRPATLYKGLEKFCPLRADIAAKGFDMVVVRELTGGIYFGQPKGRDGEGSDTRAFDTEVYYKYEIERIARAAFDAAMKRRKQVTSVDKANVLQSSILWRETVAEIAKEYPEVQVENMYIDNATMQLIKAPESFDVLLCSNIFGDIISDEAAMITGSMGMLPSASLNEEGFGLYEPAGGSAPDIAGKGIANPIAQILSAAMMLRYSFNLNEAATAIENAVQKVLADGHRTGDLADNSTPVSTAEMGTLIANAI</sequence>
<reference key="1">
    <citation type="journal article" date="2004" name="Nat. Biotechnol.">
        <title>The genome sequence of the capnophilic rumen bacterium Mannheimia succiniciproducens.</title>
        <authorList>
            <person name="Hong S.H."/>
            <person name="Kim J.S."/>
            <person name="Lee S.Y."/>
            <person name="In Y.H."/>
            <person name="Choi S.S."/>
            <person name="Rih J.-K."/>
            <person name="Kim C.H."/>
            <person name="Jeong H."/>
            <person name="Hur C.G."/>
            <person name="Kim J.J."/>
        </authorList>
    </citation>
    <scope>NUCLEOTIDE SEQUENCE [LARGE SCALE GENOMIC DNA]</scope>
    <source>
        <strain>KCTC 0769BP / MBEL55E</strain>
    </source>
</reference>